<organism>
    <name type="scientific">Ralstonia nicotianae (strain ATCC BAA-1114 / GMI1000)</name>
    <name type="common">Ralstonia solanacearum</name>
    <dbReference type="NCBI Taxonomy" id="267608"/>
    <lineage>
        <taxon>Bacteria</taxon>
        <taxon>Pseudomonadati</taxon>
        <taxon>Pseudomonadota</taxon>
        <taxon>Betaproteobacteria</taxon>
        <taxon>Burkholderiales</taxon>
        <taxon>Burkholderiaceae</taxon>
        <taxon>Ralstonia</taxon>
        <taxon>Ralstonia solanacearum species complex</taxon>
    </lineage>
</organism>
<keyword id="KW-0067">ATP-binding</keyword>
<keyword id="KW-0997">Cell inner membrane</keyword>
<keyword id="KW-1003">Cell membrane</keyword>
<keyword id="KW-0472">Membrane</keyword>
<keyword id="KW-0547">Nucleotide-binding</keyword>
<keyword id="KW-1185">Reference proteome</keyword>
<keyword id="KW-0762">Sugar transport</keyword>
<keyword id="KW-1278">Translocase</keyword>
<keyword id="KW-0813">Transport</keyword>
<evidence type="ECO:0000255" key="1">
    <source>
        <dbReference type="HAMAP-Rule" id="MF_01727"/>
    </source>
</evidence>
<dbReference type="EC" id="7.6.2.10" evidence="1"/>
<dbReference type="EMBL" id="AL646052">
    <property type="protein sequence ID" value="CAD14969.1"/>
    <property type="molecule type" value="Genomic_DNA"/>
</dbReference>
<dbReference type="RefSeq" id="WP_011001216.1">
    <property type="nucleotide sequence ID" value="NC_003295.1"/>
</dbReference>
<dbReference type="SMR" id="Q8XZX8"/>
<dbReference type="STRING" id="267608.RSc1267"/>
<dbReference type="EnsemblBacteria" id="CAD14969">
    <property type="protein sequence ID" value="CAD14969"/>
    <property type="gene ID" value="RSc1267"/>
</dbReference>
<dbReference type="KEGG" id="rso:RSc1267"/>
<dbReference type="eggNOG" id="COG3842">
    <property type="taxonomic scope" value="Bacteria"/>
</dbReference>
<dbReference type="HOGENOM" id="CLU_000604_1_1_4"/>
<dbReference type="Proteomes" id="UP000001436">
    <property type="component" value="Chromosome"/>
</dbReference>
<dbReference type="GO" id="GO:0055052">
    <property type="term" value="C:ATP-binding cassette (ABC) transporter complex, substrate-binding subunit-containing"/>
    <property type="evidence" value="ECO:0007669"/>
    <property type="project" value="TreeGrafter"/>
</dbReference>
<dbReference type="GO" id="GO:0015430">
    <property type="term" value="F:ABC-type glycerol-3-phosphate transporter activity"/>
    <property type="evidence" value="ECO:0007669"/>
    <property type="project" value="UniProtKB-EC"/>
</dbReference>
<dbReference type="GO" id="GO:0005524">
    <property type="term" value="F:ATP binding"/>
    <property type="evidence" value="ECO:0007669"/>
    <property type="project" value="UniProtKB-KW"/>
</dbReference>
<dbReference type="GO" id="GO:0016887">
    <property type="term" value="F:ATP hydrolysis activity"/>
    <property type="evidence" value="ECO:0007669"/>
    <property type="project" value="InterPro"/>
</dbReference>
<dbReference type="GO" id="GO:0008643">
    <property type="term" value="P:carbohydrate transport"/>
    <property type="evidence" value="ECO:0007669"/>
    <property type="project" value="InterPro"/>
</dbReference>
<dbReference type="GO" id="GO:0001407">
    <property type="term" value="P:glycerophosphodiester transmembrane transport"/>
    <property type="evidence" value="ECO:0007669"/>
    <property type="project" value="TreeGrafter"/>
</dbReference>
<dbReference type="CDD" id="cd03301">
    <property type="entry name" value="ABC_MalK_N"/>
    <property type="match status" value="1"/>
</dbReference>
<dbReference type="FunFam" id="3.40.50.300:FF:000042">
    <property type="entry name" value="Maltose/maltodextrin ABC transporter, ATP-binding protein"/>
    <property type="match status" value="1"/>
</dbReference>
<dbReference type="Gene3D" id="2.40.50.100">
    <property type="match status" value="1"/>
</dbReference>
<dbReference type="Gene3D" id="2.40.50.140">
    <property type="entry name" value="Nucleic acid-binding proteins"/>
    <property type="match status" value="1"/>
</dbReference>
<dbReference type="Gene3D" id="3.40.50.300">
    <property type="entry name" value="P-loop containing nucleotide triphosphate hydrolases"/>
    <property type="match status" value="1"/>
</dbReference>
<dbReference type="InterPro" id="IPR003593">
    <property type="entry name" value="AAA+_ATPase"/>
</dbReference>
<dbReference type="InterPro" id="IPR003439">
    <property type="entry name" value="ABC_transporter-like_ATP-bd"/>
</dbReference>
<dbReference type="InterPro" id="IPR017871">
    <property type="entry name" value="ABC_transporter-like_CS"/>
</dbReference>
<dbReference type="InterPro" id="IPR015855">
    <property type="entry name" value="ABC_transpr_MalK-like"/>
</dbReference>
<dbReference type="InterPro" id="IPR047641">
    <property type="entry name" value="ABC_transpr_MalK/UgpC-like"/>
</dbReference>
<dbReference type="InterPro" id="IPR008995">
    <property type="entry name" value="Mo/tungstate-bd_C_term_dom"/>
</dbReference>
<dbReference type="InterPro" id="IPR012340">
    <property type="entry name" value="NA-bd_OB-fold"/>
</dbReference>
<dbReference type="InterPro" id="IPR027417">
    <property type="entry name" value="P-loop_NTPase"/>
</dbReference>
<dbReference type="InterPro" id="IPR013611">
    <property type="entry name" value="Transp-assoc_OB_typ2"/>
</dbReference>
<dbReference type="NCBIfam" id="NF008653">
    <property type="entry name" value="PRK11650.1"/>
    <property type="match status" value="1"/>
</dbReference>
<dbReference type="PANTHER" id="PTHR43875">
    <property type="entry name" value="MALTODEXTRIN IMPORT ATP-BINDING PROTEIN MSMX"/>
    <property type="match status" value="1"/>
</dbReference>
<dbReference type="PANTHER" id="PTHR43875:SF12">
    <property type="entry name" value="SN-GLYCEROL-3-PHOSPHATE IMPORT ATP-BINDING PROTEIN UGPC"/>
    <property type="match status" value="1"/>
</dbReference>
<dbReference type="Pfam" id="PF00005">
    <property type="entry name" value="ABC_tran"/>
    <property type="match status" value="1"/>
</dbReference>
<dbReference type="Pfam" id="PF08402">
    <property type="entry name" value="TOBE_2"/>
    <property type="match status" value="1"/>
</dbReference>
<dbReference type="SMART" id="SM00382">
    <property type="entry name" value="AAA"/>
    <property type="match status" value="1"/>
</dbReference>
<dbReference type="SUPFAM" id="SSF50331">
    <property type="entry name" value="MOP-like"/>
    <property type="match status" value="1"/>
</dbReference>
<dbReference type="SUPFAM" id="SSF52540">
    <property type="entry name" value="P-loop containing nucleoside triphosphate hydrolases"/>
    <property type="match status" value="1"/>
</dbReference>
<dbReference type="PROSITE" id="PS00211">
    <property type="entry name" value="ABC_TRANSPORTER_1"/>
    <property type="match status" value="1"/>
</dbReference>
<dbReference type="PROSITE" id="PS50893">
    <property type="entry name" value="ABC_TRANSPORTER_2"/>
    <property type="match status" value="1"/>
</dbReference>
<dbReference type="PROSITE" id="PS51315">
    <property type="entry name" value="UGPC"/>
    <property type="match status" value="1"/>
</dbReference>
<comment type="function">
    <text evidence="1">Part of the ABC transporter complex UgpBAEC involved in sn-glycerol-3-phosphate (G3P) import. Responsible for energy coupling to the transport system.</text>
</comment>
<comment type="catalytic activity">
    <reaction evidence="1">
        <text>sn-glycerol 3-phosphate(out) + ATP + H2O = sn-glycerol 3-phosphate(in) + ADP + phosphate + H(+)</text>
        <dbReference type="Rhea" id="RHEA:21668"/>
        <dbReference type="ChEBI" id="CHEBI:15377"/>
        <dbReference type="ChEBI" id="CHEBI:15378"/>
        <dbReference type="ChEBI" id="CHEBI:30616"/>
        <dbReference type="ChEBI" id="CHEBI:43474"/>
        <dbReference type="ChEBI" id="CHEBI:57597"/>
        <dbReference type="ChEBI" id="CHEBI:456216"/>
        <dbReference type="EC" id="7.6.2.10"/>
    </reaction>
</comment>
<comment type="subunit">
    <text evidence="1">The complex is composed of two ATP-binding proteins (UgpC), two transmembrane proteins (UgpA and UgpE) and a solute-binding protein (UgpB).</text>
</comment>
<comment type="subcellular location">
    <subcellularLocation>
        <location evidence="1">Cell inner membrane</location>
        <topology evidence="1">Peripheral membrane protein</topology>
    </subcellularLocation>
</comment>
<comment type="similarity">
    <text evidence="1">Belongs to the ABC transporter superfamily. sn-glycerol-3-phosphate importer (TC 3.A.1.1.3) family.</text>
</comment>
<reference key="1">
    <citation type="journal article" date="2002" name="Nature">
        <title>Genome sequence of the plant pathogen Ralstonia solanacearum.</title>
        <authorList>
            <person name="Salanoubat M."/>
            <person name="Genin S."/>
            <person name="Artiguenave F."/>
            <person name="Gouzy J."/>
            <person name="Mangenot S."/>
            <person name="Arlat M."/>
            <person name="Billault A."/>
            <person name="Brottier P."/>
            <person name="Camus J.-C."/>
            <person name="Cattolico L."/>
            <person name="Chandler M."/>
            <person name="Choisne N."/>
            <person name="Claudel-Renard C."/>
            <person name="Cunnac S."/>
            <person name="Demange N."/>
            <person name="Gaspin C."/>
            <person name="Lavie M."/>
            <person name="Moisan A."/>
            <person name="Robert C."/>
            <person name="Saurin W."/>
            <person name="Schiex T."/>
            <person name="Siguier P."/>
            <person name="Thebault P."/>
            <person name="Whalen M."/>
            <person name="Wincker P."/>
            <person name="Levy M."/>
            <person name="Weissenbach J."/>
            <person name="Boucher C.A."/>
        </authorList>
    </citation>
    <scope>NUCLEOTIDE SEQUENCE [LARGE SCALE GENOMIC DNA]</scope>
    <source>
        <strain>ATCC BAA-1114 / GMI1000</strain>
    </source>
</reference>
<protein>
    <recommendedName>
        <fullName evidence="1">sn-glycerol-3-phosphate import ATP-binding protein UgpC</fullName>
        <ecNumber evidence="1">7.6.2.10</ecNumber>
    </recommendedName>
</protein>
<feature type="chain" id="PRO_0000289761" description="sn-glycerol-3-phosphate import ATP-binding protein UgpC">
    <location>
        <begin position="1"/>
        <end position="365"/>
    </location>
</feature>
<feature type="domain" description="ABC transporter" evidence="1">
    <location>
        <begin position="4"/>
        <end position="234"/>
    </location>
</feature>
<feature type="binding site" evidence="1">
    <location>
        <begin position="36"/>
        <end position="43"/>
    </location>
    <ligand>
        <name>ATP</name>
        <dbReference type="ChEBI" id="CHEBI:30616"/>
    </ligand>
</feature>
<gene>
    <name evidence="1" type="primary">ugpC</name>
    <name type="ordered locus">RSc1267</name>
</gene>
<sequence>MAKLSLRNVQKHYAGLQVVHGIDMEIGDGEFIVIVGPSGCGKSTLLRMVAGLEAITGGEVWIGDRVVNELEPAERDIAMVFQNYALYPHMTVFDNMAYGLKIRGLPKSEILARVQQAAGILELGKLLERKPRQLSGGQRQRVAMGRAIVREPAVFLFDEPLSNLDAKLRVQMRLELKELHRRLRTTSLYVTHDQVEAMTLADRMMVLSGGRVEQIGTPLEVYARPASTFVAGFIGSPPMNLVPVSRHAGEGAQIRVDGAQAGDAPATLGHLPMGLHLPEHALMGLRPEHIEPCAADRAIAFVEVRLVEALGADAFAYGALAGHPVVVRLDPHASVKAGDRLPITASADHLHWFDPQTTRRIEALA</sequence>
<name>UGPC_RALN1</name>
<proteinExistence type="inferred from homology"/>
<accession>Q8XZX8</accession>